<reference key="1">
    <citation type="submission" date="2009-06" db="EMBL/GenBank/DDBJ databases">
        <title>Complete sequence of Desulfovibrio salexigens DSM 2638.</title>
        <authorList>
            <consortium name="US DOE Joint Genome Institute"/>
            <person name="Lucas S."/>
            <person name="Copeland A."/>
            <person name="Lapidus A."/>
            <person name="Glavina del Rio T."/>
            <person name="Tice H."/>
            <person name="Bruce D."/>
            <person name="Goodwin L."/>
            <person name="Pitluck S."/>
            <person name="Munk A.C."/>
            <person name="Brettin T."/>
            <person name="Detter J.C."/>
            <person name="Han C."/>
            <person name="Tapia R."/>
            <person name="Larimer F."/>
            <person name="Land M."/>
            <person name="Hauser L."/>
            <person name="Kyrpides N."/>
            <person name="Anderson I."/>
            <person name="Wall J.D."/>
            <person name="Arkin A.P."/>
            <person name="Dehal P."/>
            <person name="Chivian D."/>
            <person name="Giles B."/>
            <person name="Hazen T.C."/>
        </authorList>
    </citation>
    <scope>NUCLEOTIDE SEQUENCE [LARGE SCALE GENOMIC DNA]</scope>
    <source>
        <strain>ATCC 14822 / DSM 2638 / NCIMB 8403 / VKM B-1763</strain>
    </source>
</reference>
<accession>C6BU59</accession>
<sequence length="209" mass="23106">MKTQNIPKATIKRLAVYIQVLTGLKRDGVEVISSEKLARACSVNPSQIRKDLAYFGEFGVRGVGYYVHELISSIKQSLGVDRVWGCALVGVGNLGRALLRHKEFALRGFSIRAAFDCDPYKIGEVVSGLEVVCTRQFKARVEELGLEIGIITTPPERAQRAANYLVDGGIKGIVNFAQARIDVPKNVPVEYVDFTHHFYSVAFNISSME</sequence>
<comment type="function">
    <text evidence="1">Modulates transcription in response to changes in cellular NADH/NAD(+) redox state.</text>
</comment>
<comment type="subunit">
    <text evidence="1">Homodimer.</text>
</comment>
<comment type="subcellular location">
    <subcellularLocation>
        <location evidence="1">Cytoplasm</location>
    </subcellularLocation>
</comment>
<comment type="similarity">
    <text evidence="1">Belongs to the transcriptional regulatory Rex family.</text>
</comment>
<keyword id="KW-0963">Cytoplasm</keyword>
<keyword id="KW-0238">DNA-binding</keyword>
<keyword id="KW-0520">NAD</keyword>
<keyword id="KW-1185">Reference proteome</keyword>
<keyword id="KW-0678">Repressor</keyword>
<keyword id="KW-0804">Transcription</keyword>
<keyword id="KW-0805">Transcription regulation</keyword>
<name>REX_MARSD</name>
<proteinExistence type="inferred from homology"/>
<dbReference type="EMBL" id="CP001649">
    <property type="protein sequence ID" value="ACS81768.1"/>
    <property type="molecule type" value="Genomic_DNA"/>
</dbReference>
<dbReference type="RefSeq" id="WP_015853584.1">
    <property type="nucleotide sequence ID" value="NC_012881.1"/>
</dbReference>
<dbReference type="SMR" id="C6BU59"/>
<dbReference type="STRING" id="526222.Desal_3723"/>
<dbReference type="KEGG" id="dsa:Desal_3723"/>
<dbReference type="eggNOG" id="COG2344">
    <property type="taxonomic scope" value="Bacteria"/>
</dbReference>
<dbReference type="HOGENOM" id="CLU_061534_1_0_7"/>
<dbReference type="OrthoDB" id="9784760at2"/>
<dbReference type="Proteomes" id="UP000002601">
    <property type="component" value="Chromosome"/>
</dbReference>
<dbReference type="GO" id="GO:0005737">
    <property type="term" value="C:cytoplasm"/>
    <property type="evidence" value="ECO:0007669"/>
    <property type="project" value="UniProtKB-SubCell"/>
</dbReference>
<dbReference type="GO" id="GO:0003677">
    <property type="term" value="F:DNA binding"/>
    <property type="evidence" value="ECO:0007669"/>
    <property type="project" value="UniProtKB-UniRule"/>
</dbReference>
<dbReference type="GO" id="GO:0003700">
    <property type="term" value="F:DNA-binding transcription factor activity"/>
    <property type="evidence" value="ECO:0007669"/>
    <property type="project" value="UniProtKB-UniRule"/>
</dbReference>
<dbReference type="GO" id="GO:0045892">
    <property type="term" value="P:negative regulation of DNA-templated transcription"/>
    <property type="evidence" value="ECO:0007669"/>
    <property type="project" value="InterPro"/>
</dbReference>
<dbReference type="GO" id="GO:0051775">
    <property type="term" value="P:response to redox state"/>
    <property type="evidence" value="ECO:0007669"/>
    <property type="project" value="InterPro"/>
</dbReference>
<dbReference type="Gene3D" id="3.40.50.720">
    <property type="entry name" value="NAD(P)-binding Rossmann-like Domain"/>
    <property type="match status" value="1"/>
</dbReference>
<dbReference type="Gene3D" id="1.10.10.10">
    <property type="entry name" value="Winged helix-like DNA-binding domain superfamily/Winged helix DNA-binding domain"/>
    <property type="match status" value="1"/>
</dbReference>
<dbReference type="HAMAP" id="MF_01131">
    <property type="entry name" value="Rex"/>
    <property type="match status" value="1"/>
</dbReference>
<dbReference type="InterPro" id="IPR003781">
    <property type="entry name" value="CoA-bd"/>
</dbReference>
<dbReference type="InterPro" id="IPR036291">
    <property type="entry name" value="NAD(P)-bd_dom_sf"/>
</dbReference>
<dbReference type="InterPro" id="IPR009718">
    <property type="entry name" value="Rex_DNA-bd_C_dom"/>
</dbReference>
<dbReference type="InterPro" id="IPR022876">
    <property type="entry name" value="Tscrpt_rep_Rex"/>
</dbReference>
<dbReference type="InterPro" id="IPR036388">
    <property type="entry name" value="WH-like_DNA-bd_sf"/>
</dbReference>
<dbReference type="InterPro" id="IPR036390">
    <property type="entry name" value="WH_DNA-bd_sf"/>
</dbReference>
<dbReference type="NCBIfam" id="NF003989">
    <property type="entry name" value="PRK05472.1-3"/>
    <property type="match status" value="1"/>
</dbReference>
<dbReference type="NCBIfam" id="NF003993">
    <property type="entry name" value="PRK05472.2-2"/>
    <property type="match status" value="1"/>
</dbReference>
<dbReference type="NCBIfam" id="NF003994">
    <property type="entry name" value="PRK05472.2-3"/>
    <property type="match status" value="1"/>
</dbReference>
<dbReference type="NCBIfam" id="NF003995">
    <property type="entry name" value="PRK05472.2-4"/>
    <property type="match status" value="1"/>
</dbReference>
<dbReference type="NCBIfam" id="NF003996">
    <property type="entry name" value="PRK05472.2-5"/>
    <property type="match status" value="1"/>
</dbReference>
<dbReference type="PANTHER" id="PTHR35786">
    <property type="entry name" value="REDOX-SENSING TRANSCRIPTIONAL REPRESSOR REX"/>
    <property type="match status" value="1"/>
</dbReference>
<dbReference type="PANTHER" id="PTHR35786:SF1">
    <property type="entry name" value="REDOX-SENSING TRANSCRIPTIONAL REPRESSOR REX 1"/>
    <property type="match status" value="1"/>
</dbReference>
<dbReference type="Pfam" id="PF02629">
    <property type="entry name" value="CoA_binding"/>
    <property type="match status" value="1"/>
</dbReference>
<dbReference type="Pfam" id="PF06971">
    <property type="entry name" value="Put_DNA-bind_N"/>
    <property type="match status" value="1"/>
</dbReference>
<dbReference type="SMART" id="SM00881">
    <property type="entry name" value="CoA_binding"/>
    <property type="match status" value="1"/>
</dbReference>
<dbReference type="SUPFAM" id="SSF51735">
    <property type="entry name" value="NAD(P)-binding Rossmann-fold domains"/>
    <property type="match status" value="1"/>
</dbReference>
<dbReference type="SUPFAM" id="SSF46785">
    <property type="entry name" value="Winged helix' DNA-binding domain"/>
    <property type="match status" value="1"/>
</dbReference>
<gene>
    <name evidence="1" type="primary">rex</name>
    <name type="ordered locus">Desal_3723</name>
</gene>
<feature type="chain" id="PRO_1000213632" description="Redox-sensing transcriptional repressor Rex">
    <location>
        <begin position="1"/>
        <end position="209"/>
    </location>
</feature>
<feature type="DNA-binding region" description="H-T-H motif" evidence="1">
    <location>
        <begin position="16"/>
        <end position="55"/>
    </location>
</feature>
<feature type="binding site" evidence="1">
    <location>
        <begin position="90"/>
        <end position="95"/>
    </location>
    <ligand>
        <name>NAD(+)</name>
        <dbReference type="ChEBI" id="CHEBI:57540"/>
    </ligand>
</feature>
<organism>
    <name type="scientific">Maridesulfovibrio salexigens (strain ATCC 14822 / DSM 2638 / NCIMB 8403 / VKM B-1763)</name>
    <name type="common">Desulfovibrio salexigens</name>
    <dbReference type="NCBI Taxonomy" id="526222"/>
    <lineage>
        <taxon>Bacteria</taxon>
        <taxon>Pseudomonadati</taxon>
        <taxon>Thermodesulfobacteriota</taxon>
        <taxon>Desulfovibrionia</taxon>
        <taxon>Desulfovibrionales</taxon>
        <taxon>Desulfovibrionaceae</taxon>
        <taxon>Maridesulfovibrio</taxon>
    </lineage>
</organism>
<protein>
    <recommendedName>
        <fullName evidence="1">Redox-sensing transcriptional repressor Rex</fullName>
    </recommendedName>
</protein>
<evidence type="ECO:0000255" key="1">
    <source>
        <dbReference type="HAMAP-Rule" id="MF_01131"/>
    </source>
</evidence>